<accession>P39095</accession>
<reference key="1">
    <citation type="submission" date="1993-12" db="EMBL/GenBank/DDBJ databases">
        <title>Sequence of a cDNA from Leishmania major encoding a protein homologous with the human ribosomal protein L30.</title>
        <authorList>
            <person name="Robyr D.C."/>
        </authorList>
    </citation>
    <scope>NUCLEOTIDE SEQUENCE [MRNA]</scope>
    <source>
        <strain>MRHO/SU/59/P / LV39</strain>
    </source>
</reference>
<organism>
    <name type="scientific">Leishmania major</name>
    <dbReference type="NCBI Taxonomy" id="5664"/>
    <lineage>
        <taxon>Eukaryota</taxon>
        <taxon>Discoba</taxon>
        <taxon>Euglenozoa</taxon>
        <taxon>Kinetoplastea</taxon>
        <taxon>Metakinetoplastina</taxon>
        <taxon>Trypanosomatida</taxon>
        <taxon>Trypanosomatidae</taxon>
        <taxon>Leishmaniinae</taxon>
        <taxon>Leishmania</taxon>
    </lineage>
</organism>
<gene>
    <name type="primary">RPL30</name>
</gene>
<comment type="similarity">
    <text evidence="1">Belongs to the eukaryotic ribosomal protein eL30 family.</text>
</comment>
<dbReference type="EMBL" id="Z28408">
    <property type="protein sequence ID" value="CAA82249.1"/>
    <property type="molecule type" value="mRNA"/>
</dbReference>
<dbReference type="PIR" id="S44134">
    <property type="entry name" value="S44134"/>
</dbReference>
<dbReference type="SMR" id="P39095"/>
<dbReference type="VEuPathDB" id="TriTrypDB:LmjF.35.0240"/>
<dbReference type="VEuPathDB" id="TriTrypDB:LMJFC_350007800"/>
<dbReference type="VEuPathDB" id="TriTrypDB:LMJLV39_350007400"/>
<dbReference type="VEuPathDB" id="TriTrypDB:LMJSD75_350007500"/>
<dbReference type="eggNOG" id="KOG2988">
    <property type="taxonomic scope" value="Eukaryota"/>
</dbReference>
<dbReference type="GO" id="GO:1990904">
    <property type="term" value="C:ribonucleoprotein complex"/>
    <property type="evidence" value="ECO:0007669"/>
    <property type="project" value="UniProtKB-KW"/>
</dbReference>
<dbReference type="GO" id="GO:0005840">
    <property type="term" value="C:ribosome"/>
    <property type="evidence" value="ECO:0007669"/>
    <property type="project" value="UniProtKB-KW"/>
</dbReference>
<dbReference type="GO" id="GO:0003723">
    <property type="term" value="F:RNA binding"/>
    <property type="evidence" value="ECO:0007669"/>
    <property type="project" value="InterPro"/>
</dbReference>
<dbReference type="FunFam" id="3.30.1330.30:FF:000001">
    <property type="entry name" value="60S ribosomal protein L30"/>
    <property type="match status" value="1"/>
</dbReference>
<dbReference type="Gene3D" id="3.30.1330.30">
    <property type="match status" value="1"/>
</dbReference>
<dbReference type="InterPro" id="IPR039109">
    <property type="entry name" value="Ribosomal_eL30-like"/>
</dbReference>
<dbReference type="InterPro" id="IPR029064">
    <property type="entry name" value="Ribosomal_eL30-like_sf"/>
</dbReference>
<dbReference type="InterPro" id="IPR022991">
    <property type="entry name" value="Ribosomal_eL30_CS"/>
</dbReference>
<dbReference type="InterPro" id="IPR004038">
    <property type="entry name" value="Ribosomal_eL8/eL30/eS12/Gad45"/>
</dbReference>
<dbReference type="NCBIfam" id="NF002172">
    <property type="entry name" value="PRK01018.1"/>
    <property type="match status" value="1"/>
</dbReference>
<dbReference type="PANTHER" id="PTHR11449">
    <property type="entry name" value="RIBOSOMAL PROTEIN L30"/>
    <property type="match status" value="1"/>
</dbReference>
<dbReference type="Pfam" id="PF01248">
    <property type="entry name" value="Ribosomal_L7Ae"/>
    <property type="match status" value="1"/>
</dbReference>
<dbReference type="SUPFAM" id="SSF55315">
    <property type="entry name" value="L30e-like"/>
    <property type="match status" value="1"/>
</dbReference>
<dbReference type="PROSITE" id="PS00709">
    <property type="entry name" value="RIBOSOMAL_L30E_1"/>
    <property type="match status" value="1"/>
</dbReference>
<dbReference type="PROSITE" id="PS00993">
    <property type="entry name" value="RIBOSOMAL_L30E_2"/>
    <property type="match status" value="1"/>
</dbReference>
<sequence>MAKKTKSKVNTINAKLQLVMKSGKYVLGTQQALTTLRQGRSKLVVIANNCPPIRRAEVEYYCTLSKTPIHHYSGNNLDLGTACGKPFRTCVLSVTNVGDSDIAT</sequence>
<protein>
    <recommendedName>
        <fullName evidence="1">Large ribosomal subunit protein eL30</fullName>
    </recommendedName>
    <alternativeName>
        <fullName>60S ribosomal protein L30</fullName>
    </alternativeName>
</protein>
<name>RL30_LEIMA</name>
<keyword id="KW-0687">Ribonucleoprotein</keyword>
<keyword id="KW-0689">Ribosomal protein</keyword>
<evidence type="ECO:0000305" key="1"/>
<proteinExistence type="inferred from homology"/>
<feature type="chain" id="PRO_0000146128" description="Large ribosomal subunit protein eL30">
    <location>
        <begin position="1"/>
        <end position="104"/>
    </location>
</feature>